<comment type="function">
    <text evidence="1">Catalyzes the NADPH-dependent reduction of glyoxylate and hydroxypyruvate into glycolate and glycerate, respectively.</text>
</comment>
<comment type="catalytic activity">
    <reaction evidence="1">
        <text>glycolate + NADP(+) = glyoxylate + NADPH + H(+)</text>
        <dbReference type="Rhea" id="RHEA:10992"/>
        <dbReference type="ChEBI" id="CHEBI:15378"/>
        <dbReference type="ChEBI" id="CHEBI:29805"/>
        <dbReference type="ChEBI" id="CHEBI:36655"/>
        <dbReference type="ChEBI" id="CHEBI:57783"/>
        <dbReference type="ChEBI" id="CHEBI:58349"/>
        <dbReference type="EC" id="1.1.1.79"/>
    </reaction>
</comment>
<comment type="catalytic activity">
    <reaction evidence="1">
        <text>(R)-glycerate + NAD(+) = 3-hydroxypyruvate + NADH + H(+)</text>
        <dbReference type="Rhea" id="RHEA:17905"/>
        <dbReference type="ChEBI" id="CHEBI:15378"/>
        <dbReference type="ChEBI" id="CHEBI:16659"/>
        <dbReference type="ChEBI" id="CHEBI:17180"/>
        <dbReference type="ChEBI" id="CHEBI:57540"/>
        <dbReference type="ChEBI" id="CHEBI:57945"/>
        <dbReference type="EC" id="1.1.1.81"/>
    </reaction>
</comment>
<comment type="catalytic activity">
    <reaction evidence="1">
        <text>(R)-glycerate + NADP(+) = 3-hydroxypyruvate + NADPH + H(+)</text>
        <dbReference type="Rhea" id="RHEA:18657"/>
        <dbReference type="ChEBI" id="CHEBI:15378"/>
        <dbReference type="ChEBI" id="CHEBI:16659"/>
        <dbReference type="ChEBI" id="CHEBI:17180"/>
        <dbReference type="ChEBI" id="CHEBI:57783"/>
        <dbReference type="ChEBI" id="CHEBI:58349"/>
        <dbReference type="EC" id="1.1.1.81"/>
    </reaction>
</comment>
<comment type="subcellular location">
    <subcellularLocation>
        <location evidence="1">Cytoplasm</location>
    </subcellularLocation>
</comment>
<comment type="similarity">
    <text evidence="1">Belongs to the D-isomer specific 2-hydroxyacid dehydrogenase family. GhrA subfamily.</text>
</comment>
<protein>
    <recommendedName>
        <fullName evidence="1">Glyoxylate/hydroxypyruvate reductase A</fullName>
        <ecNumber evidence="1">1.1.1.79</ecNumber>
        <ecNumber evidence="1">1.1.1.81</ecNumber>
    </recommendedName>
    <alternativeName>
        <fullName evidence="1">2-ketoacid reductase</fullName>
    </alternativeName>
</protein>
<dbReference type="EC" id="1.1.1.79" evidence="1"/>
<dbReference type="EC" id="1.1.1.81" evidence="1"/>
<dbReference type="EMBL" id="CP000946">
    <property type="protein sequence ID" value="ACA78197.1"/>
    <property type="molecule type" value="Genomic_DNA"/>
</dbReference>
<dbReference type="RefSeq" id="WP_000351299.1">
    <property type="nucleotide sequence ID" value="NZ_MTFT01000032.1"/>
</dbReference>
<dbReference type="SMR" id="B1IV68"/>
<dbReference type="KEGG" id="ecl:EcolC_2566"/>
<dbReference type="HOGENOM" id="CLU_019796_1_0_6"/>
<dbReference type="GO" id="GO:0005829">
    <property type="term" value="C:cytosol"/>
    <property type="evidence" value="ECO:0007669"/>
    <property type="project" value="UniProtKB-ARBA"/>
</dbReference>
<dbReference type="GO" id="GO:0030267">
    <property type="term" value="F:glyoxylate reductase (NADPH) activity"/>
    <property type="evidence" value="ECO:0007669"/>
    <property type="project" value="UniProtKB-UniRule"/>
</dbReference>
<dbReference type="GO" id="GO:0008465">
    <property type="term" value="F:hydroxypyruvate reductase (NADH) activity"/>
    <property type="evidence" value="ECO:0007669"/>
    <property type="project" value="RHEA"/>
</dbReference>
<dbReference type="GO" id="GO:0120509">
    <property type="term" value="F:hydroxypyruvate reductase (NADPH) activity"/>
    <property type="evidence" value="ECO:0007669"/>
    <property type="project" value="RHEA"/>
</dbReference>
<dbReference type="GO" id="GO:0051287">
    <property type="term" value="F:NAD binding"/>
    <property type="evidence" value="ECO:0007669"/>
    <property type="project" value="InterPro"/>
</dbReference>
<dbReference type="CDD" id="cd12164">
    <property type="entry name" value="GDH_like_2"/>
    <property type="match status" value="1"/>
</dbReference>
<dbReference type="FunFam" id="3.40.50.720:FF:000110">
    <property type="entry name" value="Glyoxylate/hydroxypyruvate reductase A"/>
    <property type="match status" value="1"/>
</dbReference>
<dbReference type="Gene3D" id="3.40.50.720">
    <property type="entry name" value="NAD(P)-binding Rossmann-like Domain"/>
    <property type="match status" value="2"/>
</dbReference>
<dbReference type="HAMAP" id="MF_01666">
    <property type="entry name" value="2_Hacid_dh_C_GhrA"/>
    <property type="match status" value="1"/>
</dbReference>
<dbReference type="InterPro" id="IPR029753">
    <property type="entry name" value="D-isomer_DH_CS"/>
</dbReference>
<dbReference type="InterPro" id="IPR006140">
    <property type="entry name" value="D-isomer_DH_NAD-bd"/>
</dbReference>
<dbReference type="InterPro" id="IPR023514">
    <property type="entry name" value="GhrA_Enterobacterales"/>
</dbReference>
<dbReference type="InterPro" id="IPR036291">
    <property type="entry name" value="NAD(P)-bd_dom_sf"/>
</dbReference>
<dbReference type="NCBIfam" id="NF012013">
    <property type="entry name" value="PRK15469.1"/>
    <property type="match status" value="1"/>
</dbReference>
<dbReference type="PANTHER" id="PTHR43333">
    <property type="entry name" value="2-HACID_DH_C DOMAIN-CONTAINING PROTEIN"/>
    <property type="match status" value="1"/>
</dbReference>
<dbReference type="PANTHER" id="PTHR43333:SF1">
    <property type="entry name" value="D-ISOMER SPECIFIC 2-HYDROXYACID DEHYDROGENASE NAD-BINDING DOMAIN-CONTAINING PROTEIN"/>
    <property type="match status" value="1"/>
</dbReference>
<dbReference type="Pfam" id="PF02826">
    <property type="entry name" value="2-Hacid_dh_C"/>
    <property type="match status" value="1"/>
</dbReference>
<dbReference type="SUPFAM" id="SSF51735">
    <property type="entry name" value="NAD(P)-binding Rossmann-fold domains"/>
    <property type="match status" value="1"/>
</dbReference>
<dbReference type="PROSITE" id="PS00671">
    <property type="entry name" value="D_2_HYDROXYACID_DH_3"/>
    <property type="match status" value="1"/>
</dbReference>
<feature type="chain" id="PRO_0000348360" description="Glyoxylate/hydroxypyruvate reductase A">
    <location>
        <begin position="1"/>
        <end position="312"/>
    </location>
</feature>
<feature type="active site" evidence="1">
    <location>
        <position position="227"/>
    </location>
</feature>
<feature type="active site" description="Proton donor" evidence="1">
    <location>
        <position position="275"/>
    </location>
</feature>
<name>GHRA_ECOLC</name>
<gene>
    <name evidence="1" type="primary">ghrA</name>
    <name type="ordered locus">EcolC_2566</name>
</gene>
<keyword id="KW-0963">Cytoplasm</keyword>
<keyword id="KW-0520">NAD</keyword>
<keyword id="KW-0521">NADP</keyword>
<keyword id="KW-0560">Oxidoreductase</keyword>
<organism>
    <name type="scientific">Escherichia coli (strain ATCC 8739 / DSM 1576 / NBRC 3972 / NCIMB 8545 / WDCM 00012 / Crooks)</name>
    <dbReference type="NCBI Taxonomy" id="481805"/>
    <lineage>
        <taxon>Bacteria</taxon>
        <taxon>Pseudomonadati</taxon>
        <taxon>Pseudomonadota</taxon>
        <taxon>Gammaproteobacteria</taxon>
        <taxon>Enterobacterales</taxon>
        <taxon>Enterobacteriaceae</taxon>
        <taxon>Escherichia</taxon>
    </lineage>
</organism>
<reference key="1">
    <citation type="submission" date="2008-02" db="EMBL/GenBank/DDBJ databases">
        <title>Complete sequence of Escherichia coli C str. ATCC 8739.</title>
        <authorList>
            <person name="Copeland A."/>
            <person name="Lucas S."/>
            <person name="Lapidus A."/>
            <person name="Glavina del Rio T."/>
            <person name="Dalin E."/>
            <person name="Tice H."/>
            <person name="Bruce D."/>
            <person name="Goodwin L."/>
            <person name="Pitluck S."/>
            <person name="Kiss H."/>
            <person name="Brettin T."/>
            <person name="Detter J.C."/>
            <person name="Han C."/>
            <person name="Kuske C.R."/>
            <person name="Schmutz J."/>
            <person name="Larimer F."/>
            <person name="Land M."/>
            <person name="Hauser L."/>
            <person name="Kyrpides N."/>
            <person name="Mikhailova N."/>
            <person name="Ingram L."/>
            <person name="Richardson P."/>
        </authorList>
    </citation>
    <scope>NUCLEOTIDE SEQUENCE [LARGE SCALE GENOMIC DNA]</scope>
    <source>
        <strain>ATCC 8739 / DSM 1576 / NBRC 3972 / NCIMB 8545 / WDCM 00012 / Crooks</strain>
    </source>
</reference>
<proteinExistence type="inferred from homology"/>
<sequence>MDIIFYHPTFDTQWWIEALRKAIPQARVRAWKSGDNDSADYALVWHPPVEMLAGRDLKAVFALGAGVDSILSKLQAHPEMLKPSVPLFRLEDTGMGEQMQEYAVSQVLHWFRRFDDYRIQQNSSHWQPLPEYHREDFTIGILGAGVLGSKVAQSLQTWRFPLRCWSRTRKSWPGVQSFAGREELSAFLSQCRVLINLLPNTPETVGIINQQLLEKLPDGAYLLNLARGVHVVEDDLLAALDSGKVKGAMLDVFNREPLPPESPLWQHPRVTITPHVAAITRPAEAVEYISRTIAQLEKGERVCGQVDRARGY</sequence>
<accession>B1IV68</accession>
<evidence type="ECO:0000255" key="1">
    <source>
        <dbReference type="HAMAP-Rule" id="MF_01666"/>
    </source>
</evidence>